<dbReference type="EC" id="6.3.2.8" evidence="1"/>
<dbReference type="EMBL" id="CP001089">
    <property type="protein sequence ID" value="ACD94395.1"/>
    <property type="molecule type" value="Genomic_DNA"/>
</dbReference>
<dbReference type="RefSeq" id="WP_012468751.1">
    <property type="nucleotide sequence ID" value="NC_010814.1"/>
</dbReference>
<dbReference type="SMR" id="B3E3Y1"/>
<dbReference type="STRING" id="398767.Glov_0669"/>
<dbReference type="KEGG" id="glo:Glov_0669"/>
<dbReference type="eggNOG" id="COG0773">
    <property type="taxonomic scope" value="Bacteria"/>
</dbReference>
<dbReference type="HOGENOM" id="CLU_028104_2_2_7"/>
<dbReference type="OrthoDB" id="9804126at2"/>
<dbReference type="UniPathway" id="UPA00219"/>
<dbReference type="Proteomes" id="UP000002420">
    <property type="component" value="Chromosome"/>
</dbReference>
<dbReference type="GO" id="GO:0005737">
    <property type="term" value="C:cytoplasm"/>
    <property type="evidence" value="ECO:0007669"/>
    <property type="project" value="UniProtKB-SubCell"/>
</dbReference>
<dbReference type="GO" id="GO:0005524">
    <property type="term" value="F:ATP binding"/>
    <property type="evidence" value="ECO:0007669"/>
    <property type="project" value="UniProtKB-UniRule"/>
</dbReference>
<dbReference type="GO" id="GO:0008763">
    <property type="term" value="F:UDP-N-acetylmuramate-L-alanine ligase activity"/>
    <property type="evidence" value="ECO:0007669"/>
    <property type="project" value="UniProtKB-UniRule"/>
</dbReference>
<dbReference type="GO" id="GO:0051301">
    <property type="term" value="P:cell division"/>
    <property type="evidence" value="ECO:0007669"/>
    <property type="project" value="UniProtKB-KW"/>
</dbReference>
<dbReference type="GO" id="GO:0071555">
    <property type="term" value="P:cell wall organization"/>
    <property type="evidence" value="ECO:0007669"/>
    <property type="project" value="UniProtKB-KW"/>
</dbReference>
<dbReference type="GO" id="GO:0009252">
    <property type="term" value="P:peptidoglycan biosynthetic process"/>
    <property type="evidence" value="ECO:0007669"/>
    <property type="project" value="UniProtKB-UniRule"/>
</dbReference>
<dbReference type="GO" id="GO:0008360">
    <property type="term" value="P:regulation of cell shape"/>
    <property type="evidence" value="ECO:0007669"/>
    <property type="project" value="UniProtKB-KW"/>
</dbReference>
<dbReference type="Gene3D" id="3.90.190.20">
    <property type="entry name" value="Mur ligase, C-terminal domain"/>
    <property type="match status" value="1"/>
</dbReference>
<dbReference type="Gene3D" id="3.40.1190.10">
    <property type="entry name" value="Mur-like, catalytic domain"/>
    <property type="match status" value="1"/>
</dbReference>
<dbReference type="Gene3D" id="3.40.50.720">
    <property type="entry name" value="NAD(P)-binding Rossmann-like Domain"/>
    <property type="match status" value="1"/>
</dbReference>
<dbReference type="HAMAP" id="MF_00046">
    <property type="entry name" value="MurC"/>
    <property type="match status" value="1"/>
</dbReference>
<dbReference type="InterPro" id="IPR036565">
    <property type="entry name" value="Mur-like_cat_sf"/>
</dbReference>
<dbReference type="InterPro" id="IPR004101">
    <property type="entry name" value="Mur_ligase_C"/>
</dbReference>
<dbReference type="InterPro" id="IPR036615">
    <property type="entry name" value="Mur_ligase_C_dom_sf"/>
</dbReference>
<dbReference type="InterPro" id="IPR013221">
    <property type="entry name" value="Mur_ligase_cen"/>
</dbReference>
<dbReference type="InterPro" id="IPR000713">
    <property type="entry name" value="Mur_ligase_N"/>
</dbReference>
<dbReference type="InterPro" id="IPR050061">
    <property type="entry name" value="MurCDEF_pg_biosynth"/>
</dbReference>
<dbReference type="InterPro" id="IPR005758">
    <property type="entry name" value="UDP-N-AcMur_Ala_ligase_MurC"/>
</dbReference>
<dbReference type="NCBIfam" id="TIGR01082">
    <property type="entry name" value="murC"/>
    <property type="match status" value="1"/>
</dbReference>
<dbReference type="PANTHER" id="PTHR43445:SF3">
    <property type="entry name" value="UDP-N-ACETYLMURAMATE--L-ALANINE LIGASE"/>
    <property type="match status" value="1"/>
</dbReference>
<dbReference type="PANTHER" id="PTHR43445">
    <property type="entry name" value="UDP-N-ACETYLMURAMATE--L-ALANINE LIGASE-RELATED"/>
    <property type="match status" value="1"/>
</dbReference>
<dbReference type="Pfam" id="PF01225">
    <property type="entry name" value="Mur_ligase"/>
    <property type="match status" value="1"/>
</dbReference>
<dbReference type="Pfam" id="PF02875">
    <property type="entry name" value="Mur_ligase_C"/>
    <property type="match status" value="1"/>
</dbReference>
<dbReference type="Pfam" id="PF08245">
    <property type="entry name" value="Mur_ligase_M"/>
    <property type="match status" value="1"/>
</dbReference>
<dbReference type="SUPFAM" id="SSF51984">
    <property type="entry name" value="MurCD N-terminal domain"/>
    <property type="match status" value="1"/>
</dbReference>
<dbReference type="SUPFAM" id="SSF53623">
    <property type="entry name" value="MurD-like peptide ligases, catalytic domain"/>
    <property type="match status" value="1"/>
</dbReference>
<dbReference type="SUPFAM" id="SSF53244">
    <property type="entry name" value="MurD-like peptide ligases, peptide-binding domain"/>
    <property type="match status" value="1"/>
</dbReference>
<evidence type="ECO:0000255" key="1">
    <source>
        <dbReference type="HAMAP-Rule" id="MF_00046"/>
    </source>
</evidence>
<reference key="1">
    <citation type="submission" date="2008-05" db="EMBL/GenBank/DDBJ databases">
        <title>Complete sequence of chromosome of Geobacter lovleyi SZ.</title>
        <authorList>
            <consortium name="US DOE Joint Genome Institute"/>
            <person name="Lucas S."/>
            <person name="Copeland A."/>
            <person name="Lapidus A."/>
            <person name="Glavina del Rio T."/>
            <person name="Dalin E."/>
            <person name="Tice H."/>
            <person name="Bruce D."/>
            <person name="Goodwin L."/>
            <person name="Pitluck S."/>
            <person name="Chertkov O."/>
            <person name="Meincke L."/>
            <person name="Brettin T."/>
            <person name="Detter J.C."/>
            <person name="Han C."/>
            <person name="Tapia R."/>
            <person name="Kuske C.R."/>
            <person name="Schmutz J."/>
            <person name="Larimer F."/>
            <person name="Land M."/>
            <person name="Hauser L."/>
            <person name="Kyrpides N."/>
            <person name="Mikhailova N."/>
            <person name="Sung Y."/>
            <person name="Fletcher K.E."/>
            <person name="Ritalahti K.M."/>
            <person name="Loeffler F.E."/>
            <person name="Richardson P."/>
        </authorList>
    </citation>
    <scope>NUCLEOTIDE SEQUENCE [LARGE SCALE GENOMIC DNA]</scope>
    <source>
        <strain>ATCC BAA-1151 / DSM 17278 / SZ</strain>
    </source>
</reference>
<accession>B3E3Y1</accession>
<organism>
    <name type="scientific">Trichlorobacter lovleyi (strain ATCC BAA-1151 / DSM 17278 / SZ)</name>
    <name type="common">Geobacter lovleyi</name>
    <dbReference type="NCBI Taxonomy" id="398767"/>
    <lineage>
        <taxon>Bacteria</taxon>
        <taxon>Pseudomonadati</taxon>
        <taxon>Thermodesulfobacteriota</taxon>
        <taxon>Desulfuromonadia</taxon>
        <taxon>Geobacterales</taxon>
        <taxon>Geobacteraceae</taxon>
        <taxon>Trichlorobacter</taxon>
    </lineage>
</organism>
<proteinExistence type="inferred from homology"/>
<gene>
    <name evidence="1" type="primary">murC</name>
    <name type="ordered locus">Glov_0669</name>
</gene>
<sequence length="456" mass="49749">MYGNIEKIHFVGIGGIGMSGIAEVLLNLGYQVSGSDLRESDTTERLRSLGGEICIGHAAENLTNVDVVVTSTAVQSDNPEVIEAKHRMVPVIPRAEMLAELMRMKYGIAIAGTHGKTTTTSMVATVLTHAGIDPTIVIGGKLNTLGSNAKLGQGKFLVAEADESDGSFLTLSPTIAVVTNIDADHLDYYTGGLEQIKDTFVSFINKVPFYGLAVLCQEDRNINEIIPRIKKRFMTYGLSSQADLRATHVKLDGFQTTFTAHYKGYRLGEISFNMPGAHNVLNALACTAVALELDVPFDKIQEGFAQFGGVGRRFTVKGEKNGIMVVDDYGHHPAEIRATLGAARNGWPERRLVVAFQPHRYSRTKELFNEFVTCFYDADVLVLTDIYAASEQPIPGVSAERLAEETRRHGQRDVTYIADRNDLPDYLAGIVKEGDIVITLGAGNIWQAGEALVKRL</sequence>
<comment type="function">
    <text evidence="1">Cell wall formation.</text>
</comment>
<comment type="catalytic activity">
    <reaction evidence="1">
        <text>UDP-N-acetyl-alpha-D-muramate + L-alanine + ATP = UDP-N-acetyl-alpha-D-muramoyl-L-alanine + ADP + phosphate + H(+)</text>
        <dbReference type="Rhea" id="RHEA:23372"/>
        <dbReference type="ChEBI" id="CHEBI:15378"/>
        <dbReference type="ChEBI" id="CHEBI:30616"/>
        <dbReference type="ChEBI" id="CHEBI:43474"/>
        <dbReference type="ChEBI" id="CHEBI:57972"/>
        <dbReference type="ChEBI" id="CHEBI:70757"/>
        <dbReference type="ChEBI" id="CHEBI:83898"/>
        <dbReference type="ChEBI" id="CHEBI:456216"/>
        <dbReference type="EC" id="6.3.2.8"/>
    </reaction>
</comment>
<comment type="pathway">
    <text evidence="1">Cell wall biogenesis; peptidoglycan biosynthesis.</text>
</comment>
<comment type="subcellular location">
    <subcellularLocation>
        <location evidence="1">Cytoplasm</location>
    </subcellularLocation>
</comment>
<comment type="similarity">
    <text evidence="1">Belongs to the MurCDEF family.</text>
</comment>
<protein>
    <recommendedName>
        <fullName evidence="1">UDP-N-acetylmuramate--L-alanine ligase</fullName>
        <ecNumber evidence="1">6.3.2.8</ecNumber>
    </recommendedName>
    <alternativeName>
        <fullName evidence="1">UDP-N-acetylmuramoyl-L-alanine synthetase</fullName>
    </alternativeName>
</protein>
<feature type="chain" id="PRO_1000091105" description="UDP-N-acetylmuramate--L-alanine ligase">
    <location>
        <begin position="1"/>
        <end position="456"/>
    </location>
</feature>
<feature type="binding site" evidence="1">
    <location>
        <begin position="112"/>
        <end position="118"/>
    </location>
    <ligand>
        <name>ATP</name>
        <dbReference type="ChEBI" id="CHEBI:30616"/>
    </ligand>
</feature>
<name>MURC_TRIL1</name>
<keyword id="KW-0067">ATP-binding</keyword>
<keyword id="KW-0131">Cell cycle</keyword>
<keyword id="KW-0132">Cell division</keyword>
<keyword id="KW-0133">Cell shape</keyword>
<keyword id="KW-0961">Cell wall biogenesis/degradation</keyword>
<keyword id="KW-0963">Cytoplasm</keyword>
<keyword id="KW-0436">Ligase</keyword>
<keyword id="KW-0547">Nucleotide-binding</keyword>
<keyword id="KW-0573">Peptidoglycan synthesis</keyword>
<keyword id="KW-1185">Reference proteome</keyword>